<name>MFMD_ANNMO</name>
<feature type="chain" id="PRO_0000461992" description="DMATS-type prenyltransferase mfmD">
    <location>
        <begin position="1"/>
        <end position="442"/>
    </location>
</feature>
<feature type="mutagenesis site" description="Loses the ability to farnesylate the cyclopolic acid but yields the dimethylallylated product 5-O-dimethylallylcyclopolic acid." evidence="1">
    <original>G</original>
    <variation>Y</variation>
    <location>
        <position position="257"/>
    </location>
</feature>
<accession>P9WEG3</accession>
<gene>
    <name evidence="2" type="primary">mfmD</name>
    <name type="ORF">F4805DRAFT_30118</name>
</gene>
<dbReference type="EC" id="2.5.1.-" evidence="1"/>
<dbReference type="EMBL" id="MU403194">
    <property type="protein sequence ID" value="KAI1452415.1"/>
    <property type="molecule type" value="Genomic_DNA"/>
</dbReference>
<dbReference type="UniPathway" id="UPA00213"/>
<dbReference type="CDD" id="cd13929">
    <property type="entry name" value="PT-DMATS_CymD"/>
    <property type="match status" value="1"/>
</dbReference>
<dbReference type="InterPro" id="IPR033964">
    <property type="entry name" value="Aro_prenylTrfase"/>
</dbReference>
<dbReference type="InterPro" id="IPR017795">
    <property type="entry name" value="Aro_prenylTrfase_DMATS"/>
</dbReference>
<dbReference type="NCBIfam" id="TIGR03429">
    <property type="entry name" value="arom_pren_DMATS"/>
    <property type="match status" value="1"/>
</dbReference>
<dbReference type="PANTHER" id="PTHR40627">
    <property type="entry name" value="INDOLE PRENYLTRANSFERASE TDIB-RELATED"/>
    <property type="match status" value="1"/>
</dbReference>
<dbReference type="PANTHER" id="PTHR40627:SF4">
    <property type="entry name" value="PRENYLTRANSFERASE ASQH1-RELATED"/>
    <property type="match status" value="1"/>
</dbReference>
<dbReference type="Pfam" id="PF11991">
    <property type="entry name" value="Trp_DMAT"/>
    <property type="match status" value="1"/>
</dbReference>
<dbReference type="SFLD" id="SFLDS00036">
    <property type="entry name" value="Aromatic_Prenyltransferase"/>
    <property type="match status" value="1"/>
</dbReference>
<dbReference type="SFLD" id="SFLDG01162">
    <property type="entry name" value="I"/>
    <property type="match status" value="1"/>
</dbReference>
<organism>
    <name type="scientific">Annulohypoxylon moriforme</name>
    <name type="common">Filamentous fungus</name>
    <name type="synonym">Hypoxylon moriforme</name>
    <dbReference type="NCBI Taxonomy" id="326622"/>
    <lineage>
        <taxon>Eukaryota</taxon>
        <taxon>Fungi</taxon>
        <taxon>Dikarya</taxon>
        <taxon>Ascomycota</taxon>
        <taxon>Pezizomycotina</taxon>
        <taxon>Sordariomycetes</taxon>
        <taxon>Xylariomycetidae</taxon>
        <taxon>Xylariales</taxon>
        <taxon>Hypoxylaceae</taxon>
        <taxon>Annulohypoxylon</taxon>
    </lineage>
</organism>
<protein>
    <recommendedName>
        <fullName evidence="2">DMATS-type prenyltransferase mfmD</fullName>
        <ecNumber evidence="1">2.5.1.-</ecNumber>
    </recommendedName>
    <alternativeName>
        <fullName evidence="2">11'-O-desmethylfendlerol biosynthesis cluster protein D</fullName>
    </alternativeName>
</protein>
<sequence length="442" mass="49863">MTAAVQSPVLPLLEKENVADIAIPEGDSTYWWRTSGQDLSRMLQEAGYPDEAKRQFLNYFRDTICPTLGGKPDSNALRTAVGWDGSPFEYSFEFKESTKSAGVRFVVDLTQLRPGDKSAPLTTKTTENVIESLSKKTPLFDDNWHRALSQWFVYSHAPESEQKALVAAAGYQTNIIMGFDINAKILDLAPGYLPIMAKSYFPPCFVAEAKGFTRWQALSLGIRQIPDIGSHPNILLALKLIEDYVAAKPELAGGARGLSTDFVKAGKARLKIYMRYLGDDFEEVWDYYTLGGKIPDLESDKEMFRDLMTLSSPSTYTEEDWKDTQVDPRRRAAFKTKPTAVYFSLSPDKPYPIPKVYFYPARAAPNDKVIARGLDAWLTKYNWHDGGKSVEERVESVFTHRKLEENPGIFTFIGLGRKEDSTKKGLSLQVYMTPELYVTPRF</sequence>
<evidence type="ECO:0000269" key="1">
    <source>
    </source>
</evidence>
<evidence type="ECO:0000303" key="2">
    <source>
    </source>
</evidence>
<evidence type="ECO:0000305" key="3"/>
<comment type="function">
    <text evidence="1">Prenyltransferase; part of the gene cluster that mediates the biosynthesis of the phthalide-terpenoid hybrid 11'-O-desmethylfendlerol (PubMed:38404388). Within the pathway, mfmD is responsible for farnesylation of the cyclopolic acid intermediate via an O-prenylation reaction (PubMed:38404388). The biosynthesis of 11'-O-desmethylfendlerol begins with the NR-PKS mfmB that forms 3,5-dimethylorsellinic acid (DMOA), which is then transformed into the phthalide 5,7-dihydroxy-4-(hydroxymethyl)-6-methylphthalide by the cytochrome P450 monooxygenase mfmA and the hydrolase mfmC. Subsequently, the methyltransferase mfmE catalyzes 7-O-methylation to yield 5-hydroxy-4-(hydroxymethyl)-7-methoxy-6-methylphthalide, which undergoes C-3 hydroxylation by the cytochrome P450 monooxygenase mfmF. The resultant cyclopolic acid (2,5-dihydroxy-4-(hydroxymethyl)-7-methoxy-6-methylphthalide) is then farnesylated by the DMATS-type prenyltransferase mfmD to afford 5-O-farnesylcyclopolic acid. Finally, the Pyr4-family terpene cyclase mfmH cyclizes the farnesyl moiety of 5-O-farnesylcyclopolic acid into a drimane-like structure, thus completing the biosynthesis of 11'-O-desmethylfendlerol (PubMed:38404388).</text>
</comment>
<comment type="pathway">
    <text evidence="1">Secondary metabolite biosynthesis; terpenoid biosynthesis.</text>
</comment>
<comment type="domain">
    <text evidence="1">Residue Gly-257 plays key roles in substrate selection of farnesyl diphosphate (FPP) for farnesylation of cyclopolic acid.</text>
</comment>
<comment type="similarity">
    <text evidence="3">Belongs to the tryptophan dimethylallyltransferase family.</text>
</comment>
<keyword id="KW-0808">Transferase</keyword>
<reference key="1">
    <citation type="journal article" date="2022" name="New Phytol.">
        <title>Ecological generalism drives hyperdiversity of secondary metabolite gene clusters in xylarialean endophytes.</title>
        <authorList>
            <person name="Franco M.E.E."/>
            <person name="Wisecaver J.H."/>
            <person name="Arnold A.E."/>
            <person name="Ju Y.M."/>
            <person name="Slot J.C."/>
            <person name="Ahrendt S."/>
            <person name="Moore L.P."/>
            <person name="Eastman K.E."/>
            <person name="Scott K."/>
            <person name="Konkel Z."/>
            <person name="Mondo S.J."/>
            <person name="Kuo A."/>
            <person name="Hayes R.D."/>
            <person name="Haridas S."/>
            <person name="Andreopoulos B."/>
            <person name="Riley R."/>
            <person name="LaButti K."/>
            <person name="Pangilinan J."/>
            <person name="Lipzen A."/>
            <person name="Amirebrahimi M."/>
            <person name="Yan J."/>
            <person name="Adam C."/>
            <person name="Keymanesh K."/>
            <person name="Ng V."/>
            <person name="Louie K."/>
            <person name="Northen T."/>
            <person name="Drula E."/>
            <person name="Henrissat B."/>
            <person name="Hsieh H.M."/>
            <person name="Youens-Clark K."/>
            <person name="Lutzoni F."/>
            <person name="Miadlikowska J."/>
            <person name="Eastwood D.C."/>
            <person name="Hamelin R.C."/>
            <person name="Grigoriev I.V."/>
            <person name="U'Ren J.M."/>
        </authorList>
    </citation>
    <scope>NUCLEOTIDE SEQUENCE [GENOMIC DNA]</scope>
    <source>
        <strain>CBS 123579</strain>
    </source>
</reference>
<reference key="2">
    <citation type="journal article" date="2024" name="Chem. Sci.">
        <title>Global genome mining-driven discovery of an unusual biosynthetic logic for fungal polyketide-terpenoid hybrids.</title>
        <authorList>
            <person name="Yan D."/>
            <person name="Matsuda Y."/>
        </authorList>
    </citation>
    <scope>FUNCTION</scope>
    <scope>CATALYTIC ACTIVITY</scope>
    <scope>PATHWAY</scope>
    <scope>MUTAGENESIS OF GLY-257</scope>
    <scope>DOMAIN</scope>
    <source>
        <strain>CBS 123579</strain>
    </source>
</reference>
<proteinExistence type="evidence at protein level"/>